<sequence>MASPREENVYMANVADEAERYEEMVEFMEKVVAALNGEELTVEERNLLSVAYKNVIGARRASWRIISSIEQKEESRGNEDHVASIKKYRSQIENELTSICNGILKLLDSKLIGSAATGDSKVFYLKMKGDYYRYLAEFKTGTERKEAAENTLSAYKSAQDIANGELAPTHPIRLGLALNFSVFYYEILNSPDRACNLAKQAFDEAIAELDTLGEESYKDSTLIMQLLRDNLTLWTSDMQDDGTDEIKEPSKADNE</sequence>
<protein>
    <recommendedName>
        <fullName>14-3-3 protein 5</fullName>
    </recommendedName>
</protein>
<keyword id="KW-1185">Reference proteome</keyword>
<feature type="chain" id="PRO_0000058685" description="14-3-3 protein 5">
    <location>
        <begin position="1"/>
        <end position="255"/>
    </location>
</feature>
<comment type="subunit">
    <text evidence="1">Homodimer.</text>
</comment>
<comment type="similarity">
    <text evidence="1">Belongs to the 14-3-3 family.</text>
</comment>
<proteinExistence type="inferred from homology"/>
<evidence type="ECO:0000305" key="1"/>
<gene>
    <name type="primary">TFT5</name>
</gene>
<name>14335_SOLLC</name>
<accession>P93210</accession>
<reference key="1">
    <citation type="journal article" date="1999" name="Plant Physiol.">
        <title>Fusicoccin, 14-3-3 proteins, and defense responses in tomato plants.</title>
        <authorList>
            <person name="Roberts M.R."/>
            <person name="Bowles D.J."/>
        </authorList>
    </citation>
    <scope>NUCLEOTIDE SEQUENCE [GENOMIC DNA]</scope>
    <source>
        <strain>cv. Moneymaker</strain>
        <tissue>Leaf</tissue>
    </source>
</reference>
<organism>
    <name type="scientific">Solanum lycopersicum</name>
    <name type="common">Tomato</name>
    <name type="synonym">Lycopersicon esculentum</name>
    <dbReference type="NCBI Taxonomy" id="4081"/>
    <lineage>
        <taxon>Eukaryota</taxon>
        <taxon>Viridiplantae</taxon>
        <taxon>Streptophyta</taxon>
        <taxon>Embryophyta</taxon>
        <taxon>Tracheophyta</taxon>
        <taxon>Spermatophyta</taxon>
        <taxon>Magnoliopsida</taxon>
        <taxon>eudicotyledons</taxon>
        <taxon>Gunneridae</taxon>
        <taxon>Pentapetalae</taxon>
        <taxon>asterids</taxon>
        <taxon>lamiids</taxon>
        <taxon>Solanales</taxon>
        <taxon>Solanaceae</taxon>
        <taxon>Solanoideae</taxon>
        <taxon>Solaneae</taxon>
        <taxon>Solanum</taxon>
        <taxon>Solanum subgen. Lycopersicon</taxon>
    </lineage>
</organism>
<dbReference type="EMBL" id="X95903">
    <property type="protein sequence ID" value="CAA65148.1"/>
    <property type="molecule type" value="Genomic_DNA"/>
</dbReference>
<dbReference type="SMR" id="P93210"/>
<dbReference type="FunCoup" id="P93210">
    <property type="interactions" value="3360"/>
</dbReference>
<dbReference type="STRING" id="4081.P93210"/>
<dbReference type="PaxDb" id="4081-Solyc04g012120.2.1"/>
<dbReference type="eggNOG" id="KOG0841">
    <property type="taxonomic scope" value="Eukaryota"/>
</dbReference>
<dbReference type="InParanoid" id="P93210"/>
<dbReference type="Proteomes" id="UP000004994">
    <property type="component" value="Unplaced"/>
</dbReference>
<dbReference type="ExpressionAtlas" id="P93210">
    <property type="expression patterns" value="baseline and differential"/>
</dbReference>
<dbReference type="GO" id="GO:0005737">
    <property type="term" value="C:cytoplasm"/>
    <property type="evidence" value="ECO:0000318"/>
    <property type="project" value="GO_Central"/>
</dbReference>
<dbReference type="GO" id="GO:0008104">
    <property type="term" value="P:protein localization"/>
    <property type="evidence" value="ECO:0000318"/>
    <property type="project" value="GO_Central"/>
</dbReference>
<dbReference type="GO" id="GO:0007165">
    <property type="term" value="P:signal transduction"/>
    <property type="evidence" value="ECO:0000318"/>
    <property type="project" value="GO_Central"/>
</dbReference>
<dbReference type="FunFam" id="1.20.190.20:FF:000002">
    <property type="entry name" value="14-3-3 protein epsilon"/>
    <property type="match status" value="1"/>
</dbReference>
<dbReference type="Gene3D" id="1.20.190.20">
    <property type="entry name" value="14-3-3 domain"/>
    <property type="match status" value="1"/>
</dbReference>
<dbReference type="InterPro" id="IPR000308">
    <property type="entry name" value="14-3-3"/>
</dbReference>
<dbReference type="InterPro" id="IPR023409">
    <property type="entry name" value="14-3-3_CS"/>
</dbReference>
<dbReference type="InterPro" id="IPR036815">
    <property type="entry name" value="14-3-3_dom_sf"/>
</dbReference>
<dbReference type="InterPro" id="IPR023410">
    <property type="entry name" value="14-3-3_domain"/>
</dbReference>
<dbReference type="PANTHER" id="PTHR18860">
    <property type="entry name" value="14-3-3 PROTEIN"/>
    <property type="match status" value="1"/>
</dbReference>
<dbReference type="Pfam" id="PF00244">
    <property type="entry name" value="14-3-3"/>
    <property type="match status" value="1"/>
</dbReference>
<dbReference type="PIRSF" id="PIRSF000868">
    <property type="entry name" value="14-3-3"/>
    <property type="match status" value="1"/>
</dbReference>
<dbReference type="PRINTS" id="PR00305">
    <property type="entry name" value="1433ZETA"/>
</dbReference>
<dbReference type="SMART" id="SM00101">
    <property type="entry name" value="14_3_3"/>
    <property type="match status" value="1"/>
</dbReference>
<dbReference type="SUPFAM" id="SSF48445">
    <property type="entry name" value="14-3-3 protein"/>
    <property type="match status" value="1"/>
</dbReference>
<dbReference type="PROSITE" id="PS00796">
    <property type="entry name" value="1433_1"/>
    <property type="match status" value="1"/>
</dbReference>
<dbReference type="PROSITE" id="PS00797">
    <property type="entry name" value="1433_2"/>
    <property type="match status" value="1"/>
</dbReference>